<sequence>MVPVARASLFTLACLLVSVCAQNFPGPPPGAVLRGPFPPARPSLTNRVHPPTSAAGMQLMRRMAVSEAVLSSDYTKRMTALDAIQNIPCVFRNPVLKYLLMDYMDMKPLPLPGSVQSQMSPATQSMILTDRGRRLQAGKLLNSRCVQSHDRLGALMYDIAEVPMAASAL</sequence>
<evidence type="ECO:0000255" key="1"/>
<evidence type="ECO:0000269" key="2">
    <source>
    </source>
</evidence>
<evidence type="ECO:0000269" key="3">
    <source>
    </source>
</evidence>
<evidence type="ECO:0000305" key="4"/>
<comment type="subcellular location">
    <subcellularLocation>
        <location evidence="3">Secreted</location>
    </subcellularLocation>
</comment>
<comment type="tissue specificity">
    <text evidence="3">Component of the acid-soluble and acid-insoluble organic matrix of calcified shell layers (at protein level).</text>
</comment>
<organism>
    <name type="scientific">Haliotis asinina</name>
    <name type="common">Donkey's ear abalone</name>
    <name type="synonym">Ass's ear abalone</name>
    <dbReference type="NCBI Taxonomy" id="109174"/>
    <lineage>
        <taxon>Eukaryota</taxon>
        <taxon>Metazoa</taxon>
        <taxon>Spiralia</taxon>
        <taxon>Lophotrochozoa</taxon>
        <taxon>Mollusca</taxon>
        <taxon>Gastropoda</taxon>
        <taxon>Vetigastropoda</taxon>
        <taxon>Lepetellida</taxon>
        <taxon>Haliotoidea</taxon>
        <taxon>Haliotidae</taxon>
        <taxon>Haliotis</taxon>
    </lineage>
</organism>
<name>UP3_HALAI</name>
<accession>P86737</accession>
<protein>
    <recommendedName>
        <fullName>Uncharacterized protein 3</fullName>
    </recommendedName>
</protein>
<feature type="signal peptide" evidence="1">
    <location>
        <begin position="1"/>
        <end position="21"/>
    </location>
</feature>
<feature type="chain" id="PRO_0000399449" description="Uncharacterized protein 3" evidence="1">
    <location>
        <begin position="22"/>
        <end position="169" status="greater than"/>
    </location>
</feature>
<feature type="non-terminal residue" evidence="4">
    <location>
        <position position="169"/>
    </location>
</feature>
<proteinExistence type="evidence at protein level"/>
<reference evidence="4" key="1">
    <citation type="journal article" date="2006" name="BMC Biol.">
        <title>A rapidly evolving secretome builds and patterns a sea shell.</title>
        <authorList>
            <person name="Jackson D.J."/>
            <person name="McDougall C."/>
            <person name="Green K."/>
            <person name="Simpson F."/>
            <person name="Woerheide G."/>
            <person name="Degnan B.M."/>
        </authorList>
    </citation>
    <scope>NUCLEOTIDE SEQUENCE [MRNA]</scope>
    <source>
        <tissue evidence="2">Mantle</tissue>
    </source>
</reference>
<reference evidence="4" key="2">
    <citation type="journal article" date="2010" name="Proteome Sci.">
        <title>Proteomic analysis of the organic matrix of the abalone Haliotis asinina calcified shell.</title>
        <authorList>
            <person name="Marie B."/>
            <person name="Marie A."/>
            <person name="Jackson D.J."/>
            <person name="Dubost L."/>
            <person name="Degnan B.M."/>
            <person name="Milet C."/>
            <person name="Marin F."/>
        </authorList>
    </citation>
    <scope>PROTEIN SEQUENCE OF 35-76; 78-92 AND 138-152</scope>
    <scope>SUBCELLULAR LOCATION</scope>
    <scope>TISSUE SPECIFICITY</scope>
    <source>
        <tissue evidence="3">Shell</tissue>
    </source>
</reference>
<keyword id="KW-0903">Direct protein sequencing</keyword>
<keyword id="KW-0964">Secreted</keyword>
<keyword id="KW-0732">Signal</keyword>
<dbReference type="EMBL" id="DW986237">
    <property type="status" value="NOT_ANNOTATED_CDS"/>
    <property type="molecule type" value="mRNA"/>
</dbReference>
<dbReference type="GO" id="GO:0005576">
    <property type="term" value="C:extracellular region"/>
    <property type="evidence" value="ECO:0000314"/>
    <property type="project" value="UniProtKB"/>
</dbReference>